<protein>
    <recommendedName>
        <fullName evidence="7">E3 ubiquitin-protein ligase RNF186</fullName>
        <ecNumber evidence="3 4 5 6">2.3.2.27</ecNumber>
    </recommendedName>
    <alternativeName>
        <fullName evidence="8">RING finger protein 186</fullName>
    </alternativeName>
</protein>
<keyword id="KW-0256">Endoplasmic reticulum</keyword>
<keyword id="KW-0472">Membrane</keyword>
<keyword id="KW-0479">Metal-binding</keyword>
<keyword id="KW-1267">Proteomics identification</keyword>
<keyword id="KW-1185">Reference proteome</keyword>
<keyword id="KW-0808">Transferase</keyword>
<keyword id="KW-0812">Transmembrane</keyword>
<keyword id="KW-1133">Transmembrane helix</keyword>
<keyword id="KW-0832">Ubl conjugation</keyword>
<keyword id="KW-0833">Ubl conjugation pathway</keyword>
<keyword id="KW-0862">Zinc</keyword>
<keyword id="KW-0863">Zinc-finger</keyword>
<accession>Q9NXI6</accession>
<accession>Q53GE0</accession>
<reference key="1">
    <citation type="journal article" date="2004" name="Nat. Genet.">
        <title>Complete sequencing and characterization of 21,243 full-length human cDNAs.</title>
        <authorList>
            <person name="Ota T."/>
            <person name="Suzuki Y."/>
            <person name="Nishikawa T."/>
            <person name="Otsuki T."/>
            <person name="Sugiyama T."/>
            <person name="Irie R."/>
            <person name="Wakamatsu A."/>
            <person name="Hayashi K."/>
            <person name="Sato H."/>
            <person name="Nagai K."/>
            <person name="Kimura K."/>
            <person name="Makita H."/>
            <person name="Sekine M."/>
            <person name="Obayashi M."/>
            <person name="Nishi T."/>
            <person name="Shibahara T."/>
            <person name="Tanaka T."/>
            <person name="Ishii S."/>
            <person name="Yamamoto J."/>
            <person name="Saito K."/>
            <person name="Kawai Y."/>
            <person name="Isono Y."/>
            <person name="Nakamura Y."/>
            <person name="Nagahari K."/>
            <person name="Murakami K."/>
            <person name="Yasuda T."/>
            <person name="Iwayanagi T."/>
            <person name="Wagatsuma M."/>
            <person name="Shiratori A."/>
            <person name="Sudo H."/>
            <person name="Hosoiri T."/>
            <person name="Kaku Y."/>
            <person name="Kodaira H."/>
            <person name="Kondo H."/>
            <person name="Sugawara M."/>
            <person name="Takahashi M."/>
            <person name="Kanda K."/>
            <person name="Yokoi T."/>
            <person name="Furuya T."/>
            <person name="Kikkawa E."/>
            <person name="Omura Y."/>
            <person name="Abe K."/>
            <person name="Kamihara K."/>
            <person name="Katsuta N."/>
            <person name="Sato K."/>
            <person name="Tanikawa M."/>
            <person name="Yamazaki M."/>
            <person name="Ninomiya K."/>
            <person name="Ishibashi T."/>
            <person name="Yamashita H."/>
            <person name="Murakawa K."/>
            <person name="Fujimori K."/>
            <person name="Tanai H."/>
            <person name="Kimata M."/>
            <person name="Watanabe M."/>
            <person name="Hiraoka S."/>
            <person name="Chiba Y."/>
            <person name="Ishida S."/>
            <person name="Ono Y."/>
            <person name="Takiguchi S."/>
            <person name="Watanabe S."/>
            <person name="Yosida M."/>
            <person name="Hotuta T."/>
            <person name="Kusano J."/>
            <person name="Kanehori K."/>
            <person name="Takahashi-Fujii A."/>
            <person name="Hara H."/>
            <person name="Tanase T.-O."/>
            <person name="Nomura Y."/>
            <person name="Togiya S."/>
            <person name="Komai F."/>
            <person name="Hara R."/>
            <person name="Takeuchi K."/>
            <person name="Arita M."/>
            <person name="Imose N."/>
            <person name="Musashino K."/>
            <person name="Yuuki H."/>
            <person name="Oshima A."/>
            <person name="Sasaki N."/>
            <person name="Aotsuka S."/>
            <person name="Yoshikawa Y."/>
            <person name="Matsunawa H."/>
            <person name="Ichihara T."/>
            <person name="Shiohata N."/>
            <person name="Sano S."/>
            <person name="Moriya S."/>
            <person name="Momiyama H."/>
            <person name="Satoh N."/>
            <person name="Takami S."/>
            <person name="Terashima Y."/>
            <person name="Suzuki O."/>
            <person name="Nakagawa S."/>
            <person name="Senoh A."/>
            <person name="Mizoguchi H."/>
            <person name="Goto Y."/>
            <person name="Shimizu F."/>
            <person name="Wakebe H."/>
            <person name="Hishigaki H."/>
            <person name="Watanabe T."/>
            <person name="Sugiyama A."/>
            <person name="Takemoto M."/>
            <person name="Kawakami B."/>
            <person name="Yamazaki M."/>
            <person name="Watanabe K."/>
            <person name="Kumagai A."/>
            <person name="Itakura S."/>
            <person name="Fukuzumi Y."/>
            <person name="Fujimori Y."/>
            <person name="Komiyama M."/>
            <person name="Tashiro H."/>
            <person name="Tanigami A."/>
            <person name="Fujiwara T."/>
            <person name="Ono T."/>
            <person name="Yamada K."/>
            <person name="Fujii Y."/>
            <person name="Ozaki K."/>
            <person name="Hirao M."/>
            <person name="Ohmori Y."/>
            <person name="Kawabata A."/>
            <person name="Hikiji T."/>
            <person name="Kobatake N."/>
            <person name="Inagaki H."/>
            <person name="Ikema Y."/>
            <person name="Okamoto S."/>
            <person name="Okitani R."/>
            <person name="Kawakami T."/>
            <person name="Noguchi S."/>
            <person name="Itoh T."/>
            <person name="Shigeta K."/>
            <person name="Senba T."/>
            <person name="Matsumura K."/>
            <person name="Nakajima Y."/>
            <person name="Mizuno T."/>
            <person name="Morinaga M."/>
            <person name="Sasaki M."/>
            <person name="Togashi T."/>
            <person name="Oyama M."/>
            <person name="Hata H."/>
            <person name="Watanabe M."/>
            <person name="Komatsu T."/>
            <person name="Mizushima-Sugano J."/>
            <person name="Satoh T."/>
            <person name="Shirai Y."/>
            <person name="Takahashi Y."/>
            <person name="Nakagawa K."/>
            <person name="Okumura K."/>
            <person name="Nagase T."/>
            <person name="Nomura N."/>
            <person name="Kikuchi H."/>
            <person name="Masuho Y."/>
            <person name="Yamashita R."/>
            <person name="Nakai K."/>
            <person name="Yada T."/>
            <person name="Nakamura Y."/>
            <person name="Ohara O."/>
            <person name="Isogai T."/>
            <person name="Sugano S."/>
        </authorList>
    </citation>
    <scope>NUCLEOTIDE SEQUENCE [LARGE SCALE MRNA]</scope>
    <source>
        <tissue>Colon mucosa</tissue>
    </source>
</reference>
<reference key="2">
    <citation type="submission" date="2004-06" db="EMBL/GenBank/DDBJ databases">
        <title>Cloning of human full open reading frames in Gateway(TM) system entry vector (pDONR201).</title>
        <authorList>
            <person name="Ebert L."/>
            <person name="Schick M."/>
            <person name="Neubert P."/>
            <person name="Schatten R."/>
            <person name="Henze S."/>
            <person name="Korn B."/>
        </authorList>
    </citation>
    <scope>NUCLEOTIDE SEQUENCE [LARGE SCALE MRNA]</scope>
</reference>
<reference key="3">
    <citation type="submission" date="2005-04" db="EMBL/GenBank/DDBJ databases">
        <authorList>
            <person name="Suzuki Y."/>
            <person name="Sugano S."/>
            <person name="Totoki Y."/>
            <person name="Toyoda A."/>
            <person name="Takeda T."/>
            <person name="Sakaki Y."/>
            <person name="Tanaka A."/>
            <person name="Yokoyama S."/>
        </authorList>
    </citation>
    <scope>NUCLEOTIDE SEQUENCE [LARGE SCALE MRNA]</scope>
    <source>
        <tissue>Small intestine</tissue>
    </source>
</reference>
<reference key="4">
    <citation type="journal article" date="2006" name="Nature">
        <title>The DNA sequence and biological annotation of human chromosome 1.</title>
        <authorList>
            <person name="Gregory S.G."/>
            <person name="Barlow K.F."/>
            <person name="McLay K.E."/>
            <person name="Kaul R."/>
            <person name="Swarbreck D."/>
            <person name="Dunham A."/>
            <person name="Scott C.E."/>
            <person name="Howe K.L."/>
            <person name="Woodfine K."/>
            <person name="Spencer C.C.A."/>
            <person name="Jones M.C."/>
            <person name="Gillson C."/>
            <person name="Searle S."/>
            <person name="Zhou Y."/>
            <person name="Kokocinski F."/>
            <person name="McDonald L."/>
            <person name="Evans R."/>
            <person name="Phillips K."/>
            <person name="Atkinson A."/>
            <person name="Cooper R."/>
            <person name="Jones C."/>
            <person name="Hall R.E."/>
            <person name="Andrews T.D."/>
            <person name="Lloyd C."/>
            <person name="Ainscough R."/>
            <person name="Almeida J.P."/>
            <person name="Ambrose K.D."/>
            <person name="Anderson F."/>
            <person name="Andrew R.W."/>
            <person name="Ashwell R.I.S."/>
            <person name="Aubin K."/>
            <person name="Babbage A.K."/>
            <person name="Bagguley C.L."/>
            <person name="Bailey J."/>
            <person name="Beasley H."/>
            <person name="Bethel G."/>
            <person name="Bird C.P."/>
            <person name="Bray-Allen S."/>
            <person name="Brown J.Y."/>
            <person name="Brown A.J."/>
            <person name="Buckley D."/>
            <person name="Burton J."/>
            <person name="Bye J."/>
            <person name="Carder C."/>
            <person name="Chapman J.C."/>
            <person name="Clark S.Y."/>
            <person name="Clarke G."/>
            <person name="Clee C."/>
            <person name="Cobley V."/>
            <person name="Collier R.E."/>
            <person name="Corby N."/>
            <person name="Coville G.J."/>
            <person name="Davies J."/>
            <person name="Deadman R."/>
            <person name="Dunn M."/>
            <person name="Earthrowl M."/>
            <person name="Ellington A.G."/>
            <person name="Errington H."/>
            <person name="Frankish A."/>
            <person name="Frankland J."/>
            <person name="French L."/>
            <person name="Garner P."/>
            <person name="Garnett J."/>
            <person name="Gay L."/>
            <person name="Ghori M.R.J."/>
            <person name="Gibson R."/>
            <person name="Gilby L.M."/>
            <person name="Gillett W."/>
            <person name="Glithero R.J."/>
            <person name="Grafham D.V."/>
            <person name="Griffiths C."/>
            <person name="Griffiths-Jones S."/>
            <person name="Grocock R."/>
            <person name="Hammond S."/>
            <person name="Harrison E.S.I."/>
            <person name="Hart E."/>
            <person name="Haugen E."/>
            <person name="Heath P.D."/>
            <person name="Holmes S."/>
            <person name="Holt K."/>
            <person name="Howden P.J."/>
            <person name="Hunt A.R."/>
            <person name="Hunt S.E."/>
            <person name="Hunter G."/>
            <person name="Isherwood J."/>
            <person name="James R."/>
            <person name="Johnson C."/>
            <person name="Johnson D."/>
            <person name="Joy A."/>
            <person name="Kay M."/>
            <person name="Kershaw J.K."/>
            <person name="Kibukawa M."/>
            <person name="Kimberley A.M."/>
            <person name="King A."/>
            <person name="Knights A.J."/>
            <person name="Lad H."/>
            <person name="Laird G."/>
            <person name="Lawlor S."/>
            <person name="Leongamornlert D.A."/>
            <person name="Lloyd D.M."/>
            <person name="Loveland J."/>
            <person name="Lovell J."/>
            <person name="Lush M.J."/>
            <person name="Lyne R."/>
            <person name="Martin S."/>
            <person name="Mashreghi-Mohammadi M."/>
            <person name="Matthews L."/>
            <person name="Matthews N.S.W."/>
            <person name="McLaren S."/>
            <person name="Milne S."/>
            <person name="Mistry S."/>
            <person name="Moore M.J.F."/>
            <person name="Nickerson T."/>
            <person name="O'Dell C.N."/>
            <person name="Oliver K."/>
            <person name="Palmeiri A."/>
            <person name="Palmer S.A."/>
            <person name="Parker A."/>
            <person name="Patel D."/>
            <person name="Pearce A.V."/>
            <person name="Peck A.I."/>
            <person name="Pelan S."/>
            <person name="Phelps K."/>
            <person name="Phillimore B.J."/>
            <person name="Plumb R."/>
            <person name="Rajan J."/>
            <person name="Raymond C."/>
            <person name="Rouse G."/>
            <person name="Saenphimmachak C."/>
            <person name="Sehra H.K."/>
            <person name="Sheridan E."/>
            <person name="Shownkeen R."/>
            <person name="Sims S."/>
            <person name="Skuce C.D."/>
            <person name="Smith M."/>
            <person name="Steward C."/>
            <person name="Subramanian S."/>
            <person name="Sycamore N."/>
            <person name="Tracey A."/>
            <person name="Tromans A."/>
            <person name="Van Helmond Z."/>
            <person name="Wall M."/>
            <person name="Wallis J.M."/>
            <person name="White S."/>
            <person name="Whitehead S.L."/>
            <person name="Wilkinson J.E."/>
            <person name="Willey D.L."/>
            <person name="Williams H."/>
            <person name="Wilming L."/>
            <person name="Wray P.W."/>
            <person name="Wu Z."/>
            <person name="Coulson A."/>
            <person name="Vaudin M."/>
            <person name="Sulston J.E."/>
            <person name="Durbin R.M."/>
            <person name="Hubbard T."/>
            <person name="Wooster R."/>
            <person name="Dunham I."/>
            <person name="Carter N.P."/>
            <person name="McVean G."/>
            <person name="Ross M.T."/>
            <person name="Harrow J."/>
            <person name="Olson M.V."/>
            <person name="Beck S."/>
            <person name="Rogers J."/>
            <person name="Bentley D.R."/>
        </authorList>
    </citation>
    <scope>NUCLEOTIDE SEQUENCE [LARGE SCALE GENOMIC DNA]</scope>
</reference>
<reference key="5">
    <citation type="journal article" date="2004" name="Genome Res.">
        <title>The status, quality, and expansion of the NIH full-length cDNA project: the Mammalian Gene Collection (MGC).</title>
        <authorList>
            <consortium name="The MGC Project Team"/>
        </authorList>
    </citation>
    <scope>NUCLEOTIDE SEQUENCE [LARGE SCALE MRNA]</scope>
    <source>
        <tissue>Kidney</tissue>
        <tissue>Pancreas</tissue>
    </source>
</reference>
<reference key="6">
    <citation type="journal article" date="2013" name="Cell. Signal.">
        <title>A novel RING finger E3 ligase RNF186 regulate ER stress-mediated apoptosis through interaction with BNip1.</title>
        <authorList>
            <person name="Wang P."/>
            <person name="Wu Y."/>
            <person name="Li Y."/>
            <person name="Zheng J."/>
            <person name="Tang J."/>
        </authorList>
    </citation>
    <scope>FUNCTION</scope>
    <scope>CATALYTIC ACTIVITY</scope>
    <scope>PATHWAY</scope>
    <scope>INTERACTION WITH BNIP1</scope>
    <scope>SUBCELLULAR LOCATION</scope>
    <scope>AUTOUBIQUITINATION</scope>
    <scope>DOMAIN</scope>
    <scope>MUTAGENESIS OF 58-CYS--CYS-66</scope>
</reference>
<reference key="7">
    <citation type="journal article" date="2019" name="J. Biol. Chem.">
        <title>The RING-type E3 ligase RNF186 ubiquitinates Sestrin-2 and thereby controls nutrient sensing.</title>
        <authorList>
            <person name="Lear T.B."/>
            <person name="Lockwood K.C."/>
            <person name="Ouyang Y."/>
            <person name="Evankovich J.W."/>
            <person name="Larsen M.B."/>
            <person name="Lin B."/>
            <person name="Liu Y."/>
            <person name="Chen B.B."/>
        </authorList>
    </citation>
    <scope>FUNCTION</scope>
    <scope>CATALYTIC ACTIVITY</scope>
    <scope>MUTAGENESIS OF HIS-60</scope>
</reference>
<reference key="8">
    <citation type="journal article" date="2021" name="Autophagy">
        <title>RNF186 regulates EFNB1 (ephrin B1)-EPHB2-induced autophagy in the colonic epithelial cells for the maintenance of intestinal homeostasis.</title>
        <authorList>
            <person name="Zhang H."/>
            <person name="Cui Z."/>
            <person name="Cheng D."/>
            <person name="Du Y."/>
            <person name="Guo X."/>
            <person name="Gao R."/>
            <person name="Chen J."/>
            <person name="Sun W."/>
            <person name="He R."/>
            <person name="Ma X."/>
            <person name="Peng Q."/>
            <person name="Martin B.N."/>
            <person name="Yan W."/>
            <person name="Rong Y."/>
            <person name="Wang C."/>
        </authorList>
    </citation>
    <scope>FUNCTION</scope>
    <scope>CATALYTIC ACTIVITY</scope>
    <scope>MUTAGENESIS OF ALA-64</scope>
</reference>
<reference key="9">
    <citation type="journal article" date="2021" name="J. Clin. Invest.">
        <title>Ubiquitination of ATF6 by disease-associated RNF186 promotes the innate receptor-induced unfolded protein response.</title>
        <authorList>
            <person name="Ranjan K."/>
            <person name="Hedl M."/>
            <person name="Sinha S."/>
            <person name="Zhang X."/>
            <person name="Abraham C."/>
        </authorList>
    </citation>
    <scope>FUNCTION</scope>
    <scope>CATALYTIC ACTIVITY</scope>
    <scope>SUBCELLULAR LOCATION</scope>
</reference>
<organism>
    <name type="scientific">Homo sapiens</name>
    <name type="common">Human</name>
    <dbReference type="NCBI Taxonomy" id="9606"/>
    <lineage>
        <taxon>Eukaryota</taxon>
        <taxon>Metazoa</taxon>
        <taxon>Chordata</taxon>
        <taxon>Craniata</taxon>
        <taxon>Vertebrata</taxon>
        <taxon>Euteleostomi</taxon>
        <taxon>Mammalia</taxon>
        <taxon>Eutheria</taxon>
        <taxon>Euarchontoglires</taxon>
        <taxon>Primates</taxon>
        <taxon>Haplorrhini</taxon>
        <taxon>Catarrhini</taxon>
        <taxon>Hominidae</taxon>
        <taxon>Homo</taxon>
    </lineage>
</organism>
<gene>
    <name evidence="8" type="primary">RNF186</name>
</gene>
<dbReference type="EC" id="2.3.2.27" evidence="3 4 5 6"/>
<dbReference type="EMBL" id="AK000232">
    <property type="protein sequence ID" value="BAA91024.1"/>
    <property type="molecule type" value="mRNA"/>
</dbReference>
<dbReference type="EMBL" id="CR457228">
    <property type="protein sequence ID" value="CAG33509.1"/>
    <property type="molecule type" value="mRNA"/>
</dbReference>
<dbReference type="EMBL" id="AK222991">
    <property type="protein sequence ID" value="BAD96711.1"/>
    <property type="molecule type" value="mRNA"/>
</dbReference>
<dbReference type="EMBL" id="AL391883">
    <property type="status" value="NOT_ANNOTATED_CDS"/>
    <property type="molecule type" value="Genomic_DNA"/>
</dbReference>
<dbReference type="EMBL" id="BC030960">
    <property type="protein sequence ID" value="AAH30960.1"/>
    <property type="molecule type" value="mRNA"/>
</dbReference>
<dbReference type="EMBL" id="BC051880">
    <property type="protein sequence ID" value="AAH51880.1"/>
    <property type="molecule type" value="mRNA"/>
</dbReference>
<dbReference type="CCDS" id="CCDS199.1"/>
<dbReference type="RefSeq" id="NP_061935.1">
    <property type="nucleotide sequence ID" value="NM_019062.2"/>
</dbReference>
<dbReference type="SMR" id="Q9NXI6"/>
<dbReference type="BioGRID" id="120033">
    <property type="interactions" value="13"/>
</dbReference>
<dbReference type="FunCoup" id="Q9NXI6">
    <property type="interactions" value="99"/>
</dbReference>
<dbReference type="IntAct" id="Q9NXI6">
    <property type="interactions" value="9"/>
</dbReference>
<dbReference type="MINT" id="Q9NXI6"/>
<dbReference type="STRING" id="9606.ENSP00000364263"/>
<dbReference type="iPTMnet" id="Q9NXI6"/>
<dbReference type="PhosphoSitePlus" id="Q9NXI6"/>
<dbReference type="BioMuta" id="RNF186"/>
<dbReference type="DMDM" id="74761796"/>
<dbReference type="PaxDb" id="9606-ENSP00000364263"/>
<dbReference type="PeptideAtlas" id="Q9NXI6"/>
<dbReference type="Antibodypedia" id="29735">
    <property type="antibodies" value="103 antibodies from 21 providers"/>
</dbReference>
<dbReference type="DNASU" id="54546"/>
<dbReference type="Ensembl" id="ENST00000375121.4">
    <property type="protein sequence ID" value="ENSP00000364263.2"/>
    <property type="gene ID" value="ENSG00000178828.7"/>
</dbReference>
<dbReference type="GeneID" id="54546"/>
<dbReference type="KEGG" id="hsa:54546"/>
<dbReference type="MANE-Select" id="ENST00000375121.4">
    <property type="protein sequence ID" value="ENSP00000364263.2"/>
    <property type="RefSeq nucleotide sequence ID" value="NM_019062.2"/>
    <property type="RefSeq protein sequence ID" value="NP_061935.1"/>
</dbReference>
<dbReference type="UCSC" id="uc001bcr.3">
    <property type="organism name" value="human"/>
</dbReference>
<dbReference type="AGR" id="HGNC:25978"/>
<dbReference type="CTD" id="54546"/>
<dbReference type="DisGeNET" id="54546"/>
<dbReference type="GeneCards" id="RNF186"/>
<dbReference type="HGNC" id="HGNC:25978">
    <property type="gene designation" value="RNF186"/>
</dbReference>
<dbReference type="HPA" id="ENSG00000178828">
    <property type="expression patterns" value="Tissue enhanced (epididymis, intestine, pancreas)"/>
</dbReference>
<dbReference type="neXtProt" id="NX_Q9NXI6"/>
<dbReference type="OpenTargets" id="ENSG00000178828"/>
<dbReference type="PharmGKB" id="PA142671057"/>
<dbReference type="VEuPathDB" id="HostDB:ENSG00000178828"/>
<dbReference type="eggNOG" id="KOG2177">
    <property type="taxonomic scope" value="Eukaryota"/>
</dbReference>
<dbReference type="GeneTree" id="ENSGT00510000049175"/>
<dbReference type="HOGENOM" id="CLU_085235_0_0_1"/>
<dbReference type="InParanoid" id="Q9NXI6"/>
<dbReference type="OMA" id="EVQLCPQ"/>
<dbReference type="OrthoDB" id="252722at2759"/>
<dbReference type="PAN-GO" id="Q9NXI6">
    <property type="GO annotations" value="8 GO annotations based on evolutionary models"/>
</dbReference>
<dbReference type="PhylomeDB" id="Q9NXI6"/>
<dbReference type="TreeFam" id="TF331690"/>
<dbReference type="BRENDA" id="2.3.2.27">
    <property type="organism ID" value="2681"/>
</dbReference>
<dbReference type="PathwayCommons" id="Q9NXI6"/>
<dbReference type="SignaLink" id="Q9NXI6"/>
<dbReference type="SIGNOR" id="Q9NXI6"/>
<dbReference type="UniPathway" id="UPA00143"/>
<dbReference type="BioGRID-ORCS" id="54546">
    <property type="hits" value="9 hits in 1187 CRISPR screens"/>
</dbReference>
<dbReference type="GenomeRNAi" id="54546"/>
<dbReference type="Pharos" id="Q9NXI6">
    <property type="development level" value="Tbio"/>
</dbReference>
<dbReference type="PRO" id="PR:Q9NXI6"/>
<dbReference type="Proteomes" id="UP000005640">
    <property type="component" value="Chromosome 1"/>
</dbReference>
<dbReference type="RNAct" id="Q9NXI6">
    <property type="molecule type" value="protein"/>
</dbReference>
<dbReference type="Bgee" id="ENSG00000178828">
    <property type="expression patterns" value="Expressed in jejunal mucosa and 66 other cell types or tissues"/>
</dbReference>
<dbReference type="GO" id="GO:0005783">
    <property type="term" value="C:endoplasmic reticulum"/>
    <property type="evidence" value="ECO:0000314"/>
    <property type="project" value="UniProt"/>
</dbReference>
<dbReference type="GO" id="GO:0005789">
    <property type="term" value="C:endoplasmic reticulum membrane"/>
    <property type="evidence" value="ECO:0000314"/>
    <property type="project" value="UniProtKB"/>
</dbReference>
<dbReference type="GO" id="GO:0061630">
    <property type="term" value="F:ubiquitin protein ligase activity"/>
    <property type="evidence" value="ECO:0000314"/>
    <property type="project" value="UniProt"/>
</dbReference>
<dbReference type="GO" id="GO:0031625">
    <property type="term" value="F:ubiquitin protein ligase binding"/>
    <property type="evidence" value="ECO:0000314"/>
    <property type="project" value="UniProt"/>
</dbReference>
<dbReference type="GO" id="GO:0004842">
    <property type="term" value="F:ubiquitin-protein transferase activity"/>
    <property type="evidence" value="ECO:0000314"/>
    <property type="project" value="UniProtKB"/>
</dbReference>
<dbReference type="GO" id="GO:0008270">
    <property type="term" value="F:zinc ion binding"/>
    <property type="evidence" value="ECO:0007669"/>
    <property type="project" value="UniProtKB-KW"/>
</dbReference>
<dbReference type="GO" id="GO:0070059">
    <property type="term" value="P:intrinsic apoptotic signaling pathway in response to endoplasmic reticulum stress"/>
    <property type="evidence" value="ECO:0000315"/>
    <property type="project" value="UniProtKB"/>
</dbReference>
<dbReference type="GO" id="GO:0043161">
    <property type="term" value="P:proteasome-mediated ubiquitin-dependent protein catabolic process"/>
    <property type="evidence" value="ECO:0000314"/>
    <property type="project" value="UniProtKB"/>
</dbReference>
<dbReference type="GO" id="GO:0051865">
    <property type="term" value="P:protein autoubiquitination"/>
    <property type="evidence" value="ECO:0000314"/>
    <property type="project" value="UniProtKB"/>
</dbReference>
<dbReference type="GO" id="GO:0035519">
    <property type="term" value="P:protein K29-linked ubiquitination"/>
    <property type="evidence" value="ECO:0000314"/>
    <property type="project" value="UniProtKB"/>
</dbReference>
<dbReference type="GO" id="GO:0070534">
    <property type="term" value="P:protein K63-linked ubiquitination"/>
    <property type="evidence" value="ECO:0000314"/>
    <property type="project" value="UniProtKB"/>
</dbReference>
<dbReference type="GO" id="GO:0070585">
    <property type="term" value="P:protein localization to mitochondrion"/>
    <property type="evidence" value="ECO:0000315"/>
    <property type="project" value="UniProtKB"/>
</dbReference>
<dbReference type="GO" id="GO:2000785">
    <property type="term" value="P:regulation of autophagosome assembly"/>
    <property type="evidence" value="ECO:0000314"/>
    <property type="project" value="UniProt"/>
</dbReference>
<dbReference type="CDD" id="cd16557">
    <property type="entry name" value="RING-HC_RNF186"/>
    <property type="match status" value="1"/>
</dbReference>
<dbReference type="FunFam" id="3.30.40.10:FF:000197">
    <property type="entry name" value="E3 ubiquitin-protein ligase RNF152"/>
    <property type="match status" value="1"/>
</dbReference>
<dbReference type="Gene3D" id="3.30.40.10">
    <property type="entry name" value="Zinc/RING finger domain, C3HC4 (zinc finger)"/>
    <property type="match status" value="1"/>
</dbReference>
<dbReference type="InterPro" id="IPR051435">
    <property type="entry name" value="RING_finger_E3_ubiq-ligases"/>
</dbReference>
<dbReference type="InterPro" id="IPR001841">
    <property type="entry name" value="Znf_RING"/>
</dbReference>
<dbReference type="InterPro" id="IPR013083">
    <property type="entry name" value="Znf_RING/FYVE/PHD"/>
</dbReference>
<dbReference type="InterPro" id="IPR017907">
    <property type="entry name" value="Znf_RING_CS"/>
</dbReference>
<dbReference type="PANTHER" id="PTHR22791:SF28">
    <property type="entry name" value="E3 UBIQUITIN-PROTEIN LIGASE RNF186"/>
    <property type="match status" value="1"/>
</dbReference>
<dbReference type="PANTHER" id="PTHR22791">
    <property type="entry name" value="RING-TYPE DOMAIN-CONTAINING PROTEIN"/>
    <property type="match status" value="1"/>
</dbReference>
<dbReference type="SMART" id="SM00184">
    <property type="entry name" value="RING"/>
    <property type="match status" value="1"/>
</dbReference>
<dbReference type="SUPFAM" id="SSF57850">
    <property type="entry name" value="RING/U-box"/>
    <property type="match status" value="1"/>
</dbReference>
<dbReference type="PROSITE" id="PS00518">
    <property type="entry name" value="ZF_RING_1"/>
    <property type="match status" value="1"/>
</dbReference>
<dbReference type="PROSITE" id="PS50089">
    <property type="entry name" value="ZF_RING_2"/>
    <property type="match status" value="1"/>
</dbReference>
<proteinExistence type="evidence at protein level"/>
<sequence length="227" mass="24145">MACTKTLQQSQPISAGATTTTTAVAPAGGHSGSTECDLECLVCREPYSCPRLPKLLACQHAFCAICLKLLLCVQDNTWSITCPLCRKVTAVPGGLICSLRDHEAVVGQLAQPCTEVSLCPQGLVDPADLAAGHPSLVGEDGQDEVSANHVAARRLAAHLLLLALLIILIGPFIYPGVLRWVLTFIIALALLMSTLFCCLPSTRGSCWPSSRTLFCREQKHSHISSIA</sequence>
<name>RN186_HUMAN</name>
<feature type="chain" id="PRO_0000261624" description="E3 ubiquitin-protein ligase RNF186">
    <location>
        <begin position="1"/>
        <end position="227"/>
    </location>
</feature>
<feature type="transmembrane region" description="Helical" evidence="1">
    <location>
        <begin position="158"/>
        <end position="178"/>
    </location>
</feature>
<feature type="transmembrane region" description="Helical" evidence="1">
    <location>
        <begin position="180"/>
        <end position="200"/>
    </location>
</feature>
<feature type="zinc finger region" description="RING-type" evidence="2">
    <location>
        <begin position="40"/>
        <end position="86"/>
    </location>
</feature>
<feature type="sequence variant" id="VAR_029460" description="In dbSNP:rs1541185.">
    <original>A</original>
    <variation>T</variation>
    <location>
        <position position="23"/>
    </location>
</feature>
<feature type="sequence variant" id="VAR_052111" description="In dbSNP:rs35541730.">
    <original>P</original>
    <variation>T</variation>
    <location>
        <position position="208"/>
    </location>
</feature>
<feature type="mutagenesis site" description="Loss of autoubiquitination; loss of BNIP1 polyubiquitination; no effect on interaction with BNIP1; decreased effect on calcium release from the endoplasmic reticulum." evidence="3">
    <original>CQHAFCAIC</original>
    <variation>AQWAFAAIA</variation>
    <location>
        <begin position="58"/>
        <end position="66"/>
    </location>
</feature>
<feature type="mutagenesis site" description="Loss of ability to decrease SESN2 protein." evidence="4">
    <original>H</original>
    <variation>W</variation>
    <location>
        <position position="60"/>
    </location>
</feature>
<feature type="mutagenesis site" description="Exhibits a reduced ability to ubiquitinate EPHB2 but retained ability to ubiquitinate EPHB3." evidence="5">
    <original>A</original>
    <variation>T</variation>
    <location>
        <position position="64"/>
    </location>
</feature>
<feature type="sequence conflict" description="In Ref. 3; BAD96711." evidence="7" ref="3">
    <original>S</original>
    <variation>P</variation>
    <location>
        <position position="209"/>
    </location>
</feature>
<comment type="function">
    <text evidence="3 4 5 6">E3 ubiquitin protein ligase that is part of an apoptotic signaling pathway activated by endoplasmic reticulum stress (PubMed:23896122). Stimulates the expression of proteins specific of the unfolded protein response (UPR), ubiquitinates BNIP1 and regulates its localization to the mitochondrion and induces calcium release from the endoplasmic reticulum that ultimately leads to cell apoptosis (PubMed:23896122). Plays a role in the maintenance of intestinal homeostasis and clearance of enteric pathogens. Upon NOD2 stimulation, ubiquitinates the ER stress sensor activating transcription factor 6/ATF6 and promotes the unfolded protein response UPR (PubMed:34623328). Participates in basal level of autophagy maintenance by regulating the ubiquitination of EPHB2 and EPHB3. Upon stimulation by ligand EFNB1, ubiquitinates EPHB2 and further recruits MAP1LC3B for autophagy induction (PubMed:33280498). Controls nutrient sensing by ubiquitinating Sestrin-2/SESN2, which is an intracellular sensor of cytosolic leucine and inhibitor of mTORC1 activity (PubMed:31586034).</text>
</comment>
<comment type="catalytic activity">
    <reaction evidence="3 4 5 6">
        <text>S-ubiquitinyl-[E2 ubiquitin-conjugating enzyme]-L-cysteine + [acceptor protein]-L-lysine = [E2 ubiquitin-conjugating enzyme]-L-cysteine + N(6)-ubiquitinyl-[acceptor protein]-L-lysine.</text>
        <dbReference type="EC" id="2.3.2.27"/>
    </reaction>
</comment>
<comment type="pathway">
    <text evidence="3">Protein modification; protein ubiquitination.</text>
</comment>
<comment type="subunit">
    <text evidence="3">Interacts with BNIP1.</text>
</comment>
<comment type="interaction">
    <interactant intactId="EBI-2129361">
        <id>Q9NXI6</id>
    </interactant>
    <interactant intactId="EBI-741171">
        <id>Q96AL5</id>
        <label>PBX3</label>
    </interactant>
    <organismsDiffer>false</organismsDiffer>
    <experiments>3</experiments>
</comment>
<comment type="interaction">
    <interactant intactId="EBI-2129361">
        <id>Q9NXI6</id>
    </interactant>
    <interactant intactId="EBI-745846">
        <id>P57086</id>
        <label>SCAND1</label>
    </interactant>
    <organismsDiffer>false</organismsDiffer>
    <experiments>3</experiments>
</comment>
<comment type="subcellular location">
    <subcellularLocation>
        <location evidence="3 6">Endoplasmic reticulum membrane</location>
        <topology evidence="1">Multi-pass membrane protein</topology>
    </subcellularLocation>
</comment>
<comment type="domain">
    <text evidence="3">The RING-type domain is required for ubiquitination.</text>
</comment>
<comment type="PTM">
    <text evidence="3">Polyubiquitinated. 'Lys-29'-linked autoubiquitination leads to proteasomal degradation.</text>
</comment>
<evidence type="ECO:0000255" key="1"/>
<evidence type="ECO:0000255" key="2">
    <source>
        <dbReference type="PROSITE-ProRule" id="PRU00175"/>
    </source>
</evidence>
<evidence type="ECO:0000269" key="3">
    <source>
    </source>
</evidence>
<evidence type="ECO:0000269" key="4">
    <source>
    </source>
</evidence>
<evidence type="ECO:0000269" key="5">
    <source>
    </source>
</evidence>
<evidence type="ECO:0000269" key="6">
    <source>
    </source>
</evidence>
<evidence type="ECO:0000305" key="7"/>
<evidence type="ECO:0000312" key="8">
    <source>
        <dbReference type="HGNC" id="HGNC:25978"/>
    </source>
</evidence>